<accession>B8DDP5</accession>
<name>Y699_LISMH</name>
<evidence type="ECO:0000255" key="1">
    <source>
        <dbReference type="HAMAP-Rule" id="MF_01538"/>
    </source>
</evidence>
<proteinExistence type="inferred from homology"/>
<feature type="chain" id="PRO_1000185205" description="UPF0346 protein LMHCC_0699">
    <location>
        <begin position="1"/>
        <end position="77"/>
    </location>
</feature>
<protein>
    <recommendedName>
        <fullName evidence="1">UPF0346 protein LMHCC_0699</fullName>
    </recommendedName>
</protein>
<gene>
    <name type="ordered locus">LMHCC_0699</name>
</gene>
<sequence length="77" mass="9403">MGRSFYHFLMTYRDPKLTDQKTEFANNAYRDHSFPKQTRNYHILCDYLEFNAPYLPGMSIFDELWDAYLLDEEKNKH</sequence>
<organism>
    <name type="scientific">Listeria monocytogenes serotype 4a (strain HCC23)</name>
    <dbReference type="NCBI Taxonomy" id="552536"/>
    <lineage>
        <taxon>Bacteria</taxon>
        <taxon>Bacillati</taxon>
        <taxon>Bacillota</taxon>
        <taxon>Bacilli</taxon>
        <taxon>Bacillales</taxon>
        <taxon>Listeriaceae</taxon>
        <taxon>Listeria</taxon>
    </lineage>
</organism>
<dbReference type="EMBL" id="CP001175">
    <property type="protein sequence ID" value="ACK39054.1"/>
    <property type="molecule type" value="Genomic_DNA"/>
</dbReference>
<dbReference type="RefSeq" id="WP_003720177.1">
    <property type="nucleotide sequence ID" value="NC_011660.1"/>
</dbReference>
<dbReference type="SMR" id="B8DDP5"/>
<dbReference type="KEGG" id="lmh:LMHCC_0699"/>
<dbReference type="HOGENOM" id="CLU_177534_1_0_9"/>
<dbReference type="Gene3D" id="1.10.150.260">
    <property type="entry name" value="YozE SAM-like"/>
    <property type="match status" value="1"/>
</dbReference>
<dbReference type="HAMAP" id="MF_01538">
    <property type="entry name" value="UPF0346"/>
    <property type="match status" value="1"/>
</dbReference>
<dbReference type="InterPro" id="IPR010673">
    <property type="entry name" value="UPF0346"/>
</dbReference>
<dbReference type="InterPro" id="IPR023089">
    <property type="entry name" value="YozE_SAM-like"/>
</dbReference>
<dbReference type="InterPro" id="IPR036806">
    <property type="entry name" value="YozE_SAM-like_sf"/>
</dbReference>
<dbReference type="NCBIfam" id="NF010193">
    <property type="entry name" value="PRK13672.1"/>
    <property type="match status" value="1"/>
</dbReference>
<dbReference type="Pfam" id="PF06855">
    <property type="entry name" value="YozE_SAM_like"/>
    <property type="match status" value="1"/>
</dbReference>
<dbReference type="PIRSF" id="PIRSF037262">
    <property type="entry name" value="UCP037262"/>
    <property type="match status" value="1"/>
</dbReference>
<dbReference type="SUPFAM" id="SSF140652">
    <property type="entry name" value="YozE-like"/>
    <property type="match status" value="1"/>
</dbReference>
<comment type="similarity">
    <text evidence="1">Belongs to the UPF0346 family.</text>
</comment>
<reference key="1">
    <citation type="journal article" date="2011" name="J. Bacteriol.">
        <title>Genome sequence of lineage III Listeria monocytogenes strain HCC23.</title>
        <authorList>
            <person name="Steele C.L."/>
            <person name="Donaldson J.R."/>
            <person name="Paul D."/>
            <person name="Banes M.M."/>
            <person name="Arick T."/>
            <person name="Bridges S.M."/>
            <person name="Lawrence M.L."/>
        </authorList>
    </citation>
    <scope>NUCLEOTIDE SEQUENCE [LARGE SCALE GENOMIC DNA]</scope>
    <source>
        <strain>HCC23</strain>
    </source>
</reference>